<name>IKZF_MYXGL</name>
<keyword id="KW-0025">Alternative splicing</keyword>
<keyword id="KW-0238">DNA-binding</keyword>
<keyword id="KW-0479">Metal-binding</keyword>
<keyword id="KW-0539">Nucleus</keyword>
<keyword id="KW-0677">Repeat</keyword>
<keyword id="KW-0804">Transcription</keyword>
<keyword id="KW-0805">Transcription regulation</keyword>
<keyword id="KW-0862">Zinc</keyword>
<keyword id="KW-0863">Zinc-finger</keyword>
<evidence type="ECO:0000250" key="1">
    <source>
        <dbReference type="UniProtKB" id="Q9H2S9"/>
    </source>
</evidence>
<evidence type="ECO:0000255" key="2"/>
<evidence type="ECO:0000255" key="3">
    <source>
        <dbReference type="PROSITE-ProRule" id="PRU00042"/>
    </source>
</evidence>
<evidence type="ECO:0000256" key="4">
    <source>
        <dbReference type="SAM" id="MobiDB-lite"/>
    </source>
</evidence>
<evidence type="ECO:0000269" key="5">
    <source>
    </source>
</evidence>
<evidence type="ECO:0000303" key="6">
    <source>
    </source>
</evidence>
<evidence type="ECO:0000305" key="7"/>
<evidence type="ECO:0000312" key="8">
    <source>
        <dbReference type="EMBL" id="AAP84654.1"/>
    </source>
</evidence>
<sequence>MIQGSAPGGLSRLPSNKLTCEICGMVCIGPNVLMVHKRSHTGERPFQCNQCGASFTQKGNLLRHVKLHTDEKPFKCSLCSYACRRRDALMGHIRTHSVGKPYKCNFCSRSYKQRSSLEEHQERCPGFHQGLPSSHLAENAFSKYGTTTERADWEHVIRPGQEPPLLDDSALLPTDVRLGLDPAIETQLEPGFDKLSNQDRFSNNFQAKRKSSTPQKVFGQKRMQLELSDIHYDQATSSLSERLHEVPGPVCAQTLEPSASVFLNTPSPVTRSAGQALEATRRLESESPGLPSDIGSIVRPVYSQSVDNRFQHDSPLSTSRSGLSQQPGRHHPSPGILGGSLGGICGRPAEAVGDSRPVNMPPGRGATSSPSNSCPDSTDTESSHEERSHHRTGSGSSTSRPNGSTGRPHRPEMHQDNGRLNRVSGASDSSSLPTYNVSGSDGEALRTYPCHHCGLLFLDHVMYTLHMGCHGFRDPFECNVCGYRSRDRYEFSSHIIRGEHLPTAE</sequence>
<feature type="chain" id="PRO_0000390936" description="Ikaros family zinc finger protein">
    <location>
        <begin position="1"/>
        <end position="505"/>
    </location>
</feature>
<feature type="zinc finger region" description="C2H2-type 1" evidence="3">
    <location>
        <begin position="18"/>
        <end position="40"/>
    </location>
</feature>
<feature type="zinc finger region" description="C2H2-type 2" evidence="3">
    <location>
        <begin position="46"/>
        <end position="68"/>
    </location>
</feature>
<feature type="zinc finger region" description="C2H2-type 3" evidence="3">
    <location>
        <begin position="74"/>
        <end position="96"/>
    </location>
</feature>
<feature type="zinc finger region" description="C2H2-type 4" evidence="3">
    <location>
        <begin position="102"/>
        <end position="128"/>
    </location>
</feature>
<feature type="zinc finger region" description="C2H2-type 5" evidence="3">
    <location>
        <begin position="448"/>
        <end position="470"/>
    </location>
</feature>
<feature type="zinc finger region" description="C2H2-type 6" evidence="3">
    <location>
        <begin position="476"/>
        <end position="500"/>
    </location>
</feature>
<feature type="region of interest" description="Disordered" evidence="4">
    <location>
        <begin position="262"/>
        <end position="296"/>
    </location>
</feature>
<feature type="region of interest" description="Disordered" evidence="4">
    <location>
        <begin position="309"/>
        <end position="440"/>
    </location>
</feature>
<feature type="compositionally biased region" description="Polar residues" evidence="4">
    <location>
        <begin position="262"/>
        <end position="273"/>
    </location>
</feature>
<feature type="compositionally biased region" description="Polar residues" evidence="4">
    <location>
        <begin position="309"/>
        <end position="327"/>
    </location>
</feature>
<feature type="compositionally biased region" description="Gly residues" evidence="4">
    <location>
        <begin position="336"/>
        <end position="345"/>
    </location>
</feature>
<feature type="compositionally biased region" description="Polar residues" evidence="4">
    <location>
        <begin position="366"/>
        <end position="377"/>
    </location>
</feature>
<feature type="compositionally biased region" description="Low complexity" evidence="4">
    <location>
        <begin position="393"/>
        <end position="406"/>
    </location>
</feature>
<feature type="compositionally biased region" description="Basic and acidic residues" evidence="4">
    <location>
        <begin position="409"/>
        <end position="419"/>
    </location>
</feature>
<feature type="compositionally biased region" description="Polar residues" evidence="4">
    <location>
        <begin position="424"/>
        <end position="439"/>
    </location>
</feature>
<feature type="splice variant" id="VSP_053189" description="In isoform 2." evidence="6">
    <location>
        <begin position="98"/>
        <end position="155"/>
    </location>
</feature>
<feature type="sequence conflict" description="In Ref. 1; AAP84653." evidence="7" ref="1">
    <original>Q</original>
    <variation>L</variation>
    <location>
        <position position="187"/>
    </location>
</feature>
<feature type="sequence conflict" description="In Ref. 1; AAP84653." evidence="7" ref="1">
    <original>Q</original>
    <variation>L</variation>
    <location>
        <position position="198"/>
    </location>
</feature>
<reference evidence="7 8" key="1">
    <citation type="journal article" date="2003" name="J. Immunol.">
        <title>Ikaros family members from the agnathan Myxine glutinosa and the urochordate Oikopleura dioica: emergence of an essential transcription factor for adaptive immunity.</title>
        <authorList>
            <person name="Cupit P.M."/>
            <person name="Hansen J.D."/>
            <person name="McCarty A.S."/>
            <person name="White G."/>
            <person name="Chioda M."/>
            <person name="Spada F."/>
            <person name="Smale S.T."/>
            <person name="Cunningham C."/>
        </authorList>
    </citation>
    <scope>NUCLEOTIDE SEQUENCE [MRNA] (ISOFORM 2)</scope>
    <scope>NUCLEOTIDE SEQUENCE [MRNA] OF 6-198 (ISOFORM 1)</scope>
    <scope>SUBUNIT</scope>
    <scope>TISSUE SPECIFICITY</scope>
    <scope>DOMAIN</scope>
</reference>
<accession>Q6XDT6</accession>
<accession>Q6XDT7</accession>
<protein>
    <recommendedName>
        <fullName>Ikaros family zinc finger protein</fullName>
    </recommendedName>
    <alternativeName>
        <fullName evidence="8">Ikaros-like transcription factor</fullName>
        <shortName evidence="6">HIL</shortName>
    </alternativeName>
</protein>
<dbReference type="EMBL" id="AY237104">
    <property type="protein sequence ID" value="AAP84653.1"/>
    <property type="molecule type" value="mRNA"/>
</dbReference>
<dbReference type="EMBL" id="AY237105">
    <property type="protein sequence ID" value="AAP84654.1"/>
    <property type="molecule type" value="mRNA"/>
</dbReference>
<dbReference type="SMR" id="Q6XDT6"/>
<dbReference type="GO" id="GO:0005634">
    <property type="term" value="C:nucleus"/>
    <property type="evidence" value="ECO:0007669"/>
    <property type="project" value="UniProtKB-SubCell"/>
</dbReference>
<dbReference type="GO" id="GO:0003700">
    <property type="term" value="F:DNA-binding transcription factor activity"/>
    <property type="evidence" value="ECO:0007669"/>
    <property type="project" value="TreeGrafter"/>
</dbReference>
<dbReference type="GO" id="GO:0000978">
    <property type="term" value="F:RNA polymerase II cis-regulatory region sequence-specific DNA binding"/>
    <property type="evidence" value="ECO:0007669"/>
    <property type="project" value="TreeGrafter"/>
</dbReference>
<dbReference type="GO" id="GO:0008270">
    <property type="term" value="F:zinc ion binding"/>
    <property type="evidence" value="ECO:0007669"/>
    <property type="project" value="UniProtKB-KW"/>
</dbReference>
<dbReference type="GO" id="GO:0006357">
    <property type="term" value="P:regulation of transcription by RNA polymerase II"/>
    <property type="evidence" value="ECO:0007669"/>
    <property type="project" value="TreeGrafter"/>
</dbReference>
<dbReference type="FunFam" id="3.30.160.60:FF:000037">
    <property type="entry name" value="B-cell lymphoma/leukemia 11A isoform X1"/>
    <property type="match status" value="1"/>
</dbReference>
<dbReference type="FunFam" id="3.30.160.60:FF:000073">
    <property type="entry name" value="IKAROS family zinc finger 1"/>
    <property type="match status" value="1"/>
</dbReference>
<dbReference type="FunFam" id="3.30.160.60:FF:000080">
    <property type="entry name" value="IKAROS family zinc finger 4"/>
    <property type="match status" value="1"/>
</dbReference>
<dbReference type="FunFam" id="3.30.160.60:FF:000168">
    <property type="entry name" value="zinc finger protein Eos isoform X1"/>
    <property type="match status" value="1"/>
</dbReference>
<dbReference type="Gene3D" id="3.30.160.60">
    <property type="entry name" value="Classic Zinc Finger"/>
    <property type="match status" value="5"/>
</dbReference>
<dbReference type="InterPro" id="IPR050589">
    <property type="entry name" value="Ikaros_C2H2-ZF"/>
</dbReference>
<dbReference type="InterPro" id="IPR036236">
    <property type="entry name" value="Znf_C2H2_sf"/>
</dbReference>
<dbReference type="InterPro" id="IPR013087">
    <property type="entry name" value="Znf_C2H2_type"/>
</dbReference>
<dbReference type="PANTHER" id="PTHR24404:SF113">
    <property type="entry name" value="C2H2-TYPE DOMAIN-CONTAINING PROTEIN"/>
    <property type="match status" value="1"/>
</dbReference>
<dbReference type="PANTHER" id="PTHR24404">
    <property type="entry name" value="ZINC FINGER PROTEIN"/>
    <property type="match status" value="1"/>
</dbReference>
<dbReference type="Pfam" id="PF00096">
    <property type="entry name" value="zf-C2H2"/>
    <property type="match status" value="3"/>
</dbReference>
<dbReference type="SMART" id="SM00355">
    <property type="entry name" value="ZnF_C2H2"/>
    <property type="match status" value="6"/>
</dbReference>
<dbReference type="SUPFAM" id="SSF57667">
    <property type="entry name" value="beta-beta-alpha zinc fingers"/>
    <property type="match status" value="3"/>
</dbReference>
<dbReference type="PROSITE" id="PS00028">
    <property type="entry name" value="ZINC_FINGER_C2H2_1"/>
    <property type="match status" value="4"/>
</dbReference>
<dbReference type="PROSITE" id="PS50157">
    <property type="entry name" value="ZINC_FINGER_C2H2_2"/>
    <property type="match status" value="5"/>
</dbReference>
<proteinExistence type="evidence at protein level"/>
<comment type="subunit">
    <text evidence="5">Heterodimer and homodimer with other IKAROS family members.</text>
</comment>
<comment type="subcellular location">
    <subcellularLocation>
        <location evidence="1">Nucleus</location>
    </subcellularLocation>
</comment>
<comment type="alternative products">
    <event type="alternative splicing"/>
    <isoform>
        <id>Q6XDT6-1</id>
        <name evidence="5">1</name>
        <name evidence="5">HIL2</name>
        <sequence type="displayed"/>
    </isoform>
    <isoform>
        <id>Q6XDT6-2</id>
        <name evidence="5">2</name>
        <name evidence="5">HIL1</name>
        <sequence type="described" ref="VSP_053189"/>
    </isoform>
</comment>
<comment type="tissue specificity">
    <text evidence="5">Expression is strongest in the blood, gills and intestine.</text>
</comment>
<comment type="domain">
    <text evidence="5">N-terminal zinc-fingers recognize and bind to the consensus Ikaros target site (5'-GGGA-3'), found in the promoter regions of immunologically relevant genes.</text>
</comment>
<comment type="domain">
    <text evidence="5">C-terminal zinc fingers mediate homodimerization and heterodimerization.</text>
</comment>
<comment type="similarity">
    <text evidence="2">Belongs to the Ikaros C2H2-type zinc-finger protein family.</text>
</comment>
<organism>
    <name type="scientific">Myxine glutinosa</name>
    <name type="common">Atlantic hagfish</name>
    <dbReference type="NCBI Taxonomy" id="7769"/>
    <lineage>
        <taxon>Eukaryota</taxon>
        <taxon>Metazoa</taxon>
        <taxon>Chordata</taxon>
        <taxon>Craniata</taxon>
        <taxon>Vertebrata</taxon>
        <taxon>Cyclostomata</taxon>
        <taxon>Myxini</taxon>
        <taxon>Myxiniformes</taxon>
        <taxon>Myxinidae</taxon>
        <taxon>Myxininae</taxon>
        <taxon>Myxine</taxon>
    </lineage>
</organism>